<accession>O83437</accession>
<dbReference type="EMBL" id="AE000520">
    <property type="protein sequence ID" value="AAC65418.1"/>
    <property type="molecule type" value="Genomic_DNA"/>
</dbReference>
<dbReference type="PIR" id="C71325">
    <property type="entry name" value="C71325"/>
</dbReference>
<dbReference type="IntAct" id="O83437">
    <property type="interactions" value="1"/>
</dbReference>
<dbReference type="STRING" id="243276.TP_0422"/>
<dbReference type="EnsemblBacteria" id="AAC65418">
    <property type="protein sequence ID" value="AAC65418"/>
    <property type="gene ID" value="TP_0422"/>
</dbReference>
<dbReference type="KEGG" id="tpa:TP_0422"/>
<dbReference type="KEGG" id="tpw:TPANIC_0422"/>
<dbReference type="eggNOG" id="ENOG5032GJQ">
    <property type="taxonomic scope" value="Bacteria"/>
</dbReference>
<dbReference type="HOGENOM" id="CLU_796788_0_0_12"/>
<dbReference type="Proteomes" id="UP000000811">
    <property type="component" value="Chromosome"/>
</dbReference>
<proteinExistence type="predicted"/>
<name>Y422_TREPA</name>
<gene>
    <name type="ordered locus">TP_0422</name>
</gene>
<sequence length="341" mass="37978">MRRLSDRLRGMTGKGWSAWVRLCVLSTQVGLAAEPALARLAGVWENATRIVAIAPTADAMRFSLMLVHKPYYAYVYERVAVFSLSSLSDARADVLPPPAAQKAERVDLVLSFEGRVRVQPLVLCRWGDALFCSFFQRVSYGTRSGSVSSEQIPVRTDDPLFGFWIEEGSAEALRAYSSQAPGELNAFFFTEANFYRFRYWRDDALAFAAQRAYFTADDGVTYEIPQYVQRGAAVYSCTTGRSRVVRNFQTGTYEVRTSSDGSKRLMLRRRGAGPGSYAVGAVYPRQGFLDESALALRVDGQFLAIGEPFLRKSAVHDVTAFIDAHNARKRAPRAPLLVPDF</sequence>
<keyword id="KW-1185">Reference proteome</keyword>
<organism>
    <name type="scientific">Treponema pallidum (strain Nichols)</name>
    <dbReference type="NCBI Taxonomy" id="243276"/>
    <lineage>
        <taxon>Bacteria</taxon>
        <taxon>Pseudomonadati</taxon>
        <taxon>Spirochaetota</taxon>
        <taxon>Spirochaetia</taxon>
        <taxon>Spirochaetales</taxon>
        <taxon>Treponemataceae</taxon>
        <taxon>Treponema</taxon>
    </lineage>
</organism>
<protein>
    <recommendedName>
        <fullName>Uncharacterized protein TP_0422</fullName>
    </recommendedName>
</protein>
<feature type="chain" id="PRO_0000202252" description="Uncharacterized protein TP_0422">
    <location>
        <begin position="1"/>
        <end position="341"/>
    </location>
</feature>
<reference key="1">
    <citation type="journal article" date="1998" name="Science">
        <title>Complete genome sequence of Treponema pallidum, the syphilis spirochete.</title>
        <authorList>
            <person name="Fraser C.M."/>
            <person name="Norris S.J."/>
            <person name="Weinstock G.M."/>
            <person name="White O."/>
            <person name="Sutton G.G."/>
            <person name="Dodson R.J."/>
            <person name="Gwinn M.L."/>
            <person name="Hickey E.K."/>
            <person name="Clayton R.A."/>
            <person name="Ketchum K.A."/>
            <person name="Sodergren E."/>
            <person name="Hardham J.M."/>
            <person name="McLeod M.P."/>
            <person name="Salzberg S.L."/>
            <person name="Peterson J.D."/>
            <person name="Khalak H.G."/>
            <person name="Richardson D.L."/>
            <person name="Howell J.K."/>
            <person name="Chidambaram M."/>
            <person name="Utterback T.R."/>
            <person name="McDonald L.A."/>
            <person name="Artiach P."/>
            <person name="Bowman C."/>
            <person name="Cotton M.D."/>
            <person name="Fujii C."/>
            <person name="Garland S.A."/>
            <person name="Hatch B."/>
            <person name="Horst K."/>
            <person name="Roberts K.M."/>
            <person name="Sandusky M."/>
            <person name="Weidman J.F."/>
            <person name="Smith H.O."/>
            <person name="Venter J.C."/>
        </authorList>
    </citation>
    <scope>NUCLEOTIDE SEQUENCE [LARGE SCALE GENOMIC DNA]</scope>
    <source>
        <strain>Nichols</strain>
    </source>
</reference>